<organism>
    <name type="scientific">Lachancea thermotolerans (strain ATCC 56472 / CBS 6340 / NRRL Y-8284)</name>
    <name type="common">Yeast</name>
    <name type="synonym">Kluyveromyces thermotolerans</name>
    <dbReference type="NCBI Taxonomy" id="559295"/>
    <lineage>
        <taxon>Eukaryota</taxon>
        <taxon>Fungi</taxon>
        <taxon>Dikarya</taxon>
        <taxon>Ascomycota</taxon>
        <taxon>Saccharomycotina</taxon>
        <taxon>Saccharomycetes</taxon>
        <taxon>Saccharomycetales</taxon>
        <taxon>Saccharomycetaceae</taxon>
        <taxon>Lachancea</taxon>
    </lineage>
</organism>
<sequence>MNMAVRALEKLPLDIRTLELLERKLLKKSLPGFQELAQQYTADGSSKSLESIVHLTYFHWCNEDAPHIKKFREHYAELRDHWPYEFHRSILSMDTPKTQSIRFLWSSNSPKVLSKMSYEKYAHDTEERPSRLTELQRTVQFHEVFQHFLFLKSRPHLCKTRKGLAVPIVEIPMKPLGQNIPEVRVRNLFKRKIAYVWKVLALDSPALSRQNELSLAKIIDSPQLPEDVSSKRELKRLYQRACRGAYTIEQHPVLGLEIKESKLLKRL</sequence>
<comment type="function">
    <text evidence="1">Essential for respiratory growth and required for maintenance of mtDNA. Required for cell survival in the absence of prohibitins (By similarity).</text>
</comment>
<comment type="subcellular location">
    <subcellularLocation>
        <location evidence="1">Mitochondrion</location>
    </subcellularLocation>
</comment>
<comment type="similarity">
    <text evidence="2">Belongs to the GEP5 family.</text>
</comment>
<evidence type="ECO:0000250" key="1"/>
<evidence type="ECO:0000305" key="2"/>
<accession>C5DN25</accession>
<keyword id="KW-0496">Mitochondrion</keyword>
<keyword id="KW-1185">Reference proteome</keyword>
<feature type="chain" id="PRO_0000399686" description="Genetic interactor of prohibitin 5, mitochondrial">
    <location>
        <begin position="1"/>
        <end position="267"/>
    </location>
</feature>
<gene>
    <name type="primary">GEP5</name>
    <name type="synonym">RRG5</name>
    <name type="ordered locus">KLTH0G13596g</name>
</gene>
<dbReference type="EMBL" id="CU928171">
    <property type="protein sequence ID" value="CAR25186.1"/>
    <property type="molecule type" value="Genomic_DNA"/>
</dbReference>
<dbReference type="RefSeq" id="XP_002555623.1">
    <property type="nucleotide sequence ID" value="XM_002555577.1"/>
</dbReference>
<dbReference type="FunCoup" id="C5DN25">
    <property type="interactions" value="34"/>
</dbReference>
<dbReference type="GeneID" id="8293906"/>
<dbReference type="KEGG" id="lth:KLTH0G13596g"/>
<dbReference type="eggNOG" id="ENOG502S2Q8">
    <property type="taxonomic scope" value="Eukaryota"/>
</dbReference>
<dbReference type="HOGENOM" id="CLU_079415_0_0_1"/>
<dbReference type="InParanoid" id="C5DN25"/>
<dbReference type="OMA" id="FWPYERH"/>
<dbReference type="OrthoDB" id="4066262at2759"/>
<dbReference type="Proteomes" id="UP000002036">
    <property type="component" value="Chromosome G"/>
</dbReference>
<dbReference type="GO" id="GO:0005739">
    <property type="term" value="C:mitochondrion"/>
    <property type="evidence" value="ECO:0007669"/>
    <property type="project" value="UniProtKB-SubCell"/>
</dbReference>
<dbReference type="GO" id="GO:0000002">
    <property type="term" value="P:mitochondrial genome maintenance"/>
    <property type="evidence" value="ECO:0007669"/>
    <property type="project" value="InterPro"/>
</dbReference>
<dbReference type="InterPro" id="IPR031455">
    <property type="entry name" value="Gep5"/>
</dbReference>
<dbReference type="Pfam" id="PF17053">
    <property type="entry name" value="GEP5"/>
    <property type="match status" value="1"/>
</dbReference>
<protein>
    <recommendedName>
        <fullName>Genetic interactor of prohibitin 5, mitochondrial</fullName>
    </recommendedName>
    <alternativeName>
        <fullName>Required for respiratory growth protein 5</fullName>
    </alternativeName>
</protein>
<proteinExistence type="inferred from homology"/>
<reference key="1">
    <citation type="journal article" date="2009" name="Genome Res.">
        <title>Comparative genomics of protoploid Saccharomycetaceae.</title>
        <authorList>
            <consortium name="The Genolevures Consortium"/>
            <person name="Souciet J.-L."/>
            <person name="Dujon B."/>
            <person name="Gaillardin C."/>
            <person name="Johnston M."/>
            <person name="Baret P.V."/>
            <person name="Cliften P."/>
            <person name="Sherman D.J."/>
            <person name="Weissenbach J."/>
            <person name="Westhof E."/>
            <person name="Wincker P."/>
            <person name="Jubin C."/>
            <person name="Poulain J."/>
            <person name="Barbe V."/>
            <person name="Segurens B."/>
            <person name="Artiguenave F."/>
            <person name="Anthouard V."/>
            <person name="Vacherie B."/>
            <person name="Val M.-E."/>
            <person name="Fulton R.S."/>
            <person name="Minx P."/>
            <person name="Wilson R."/>
            <person name="Durrens P."/>
            <person name="Jean G."/>
            <person name="Marck C."/>
            <person name="Martin T."/>
            <person name="Nikolski M."/>
            <person name="Rolland T."/>
            <person name="Seret M.-L."/>
            <person name="Casaregola S."/>
            <person name="Despons L."/>
            <person name="Fairhead C."/>
            <person name="Fischer G."/>
            <person name="Lafontaine I."/>
            <person name="Leh V."/>
            <person name="Lemaire M."/>
            <person name="de Montigny J."/>
            <person name="Neuveglise C."/>
            <person name="Thierry A."/>
            <person name="Blanc-Lenfle I."/>
            <person name="Bleykasten C."/>
            <person name="Diffels J."/>
            <person name="Fritsch E."/>
            <person name="Frangeul L."/>
            <person name="Goeffon A."/>
            <person name="Jauniaux N."/>
            <person name="Kachouri-Lafond R."/>
            <person name="Payen C."/>
            <person name="Potier S."/>
            <person name="Pribylova L."/>
            <person name="Ozanne C."/>
            <person name="Richard G.-F."/>
            <person name="Sacerdot C."/>
            <person name="Straub M.-L."/>
            <person name="Talla E."/>
        </authorList>
    </citation>
    <scope>NUCLEOTIDE SEQUENCE [LARGE SCALE GENOMIC DNA]</scope>
    <source>
        <strain>ATCC 56472 / CBS 6340 / NRRL Y-8284</strain>
    </source>
</reference>
<name>GEP5_LACTC</name>